<feature type="chain" id="PRO_0000152676" description="Lysine--tRNA ligase">
    <location>
        <begin position="1"/>
        <end position="495"/>
    </location>
</feature>
<feature type="binding site" evidence="1">
    <location>
        <position position="406"/>
    </location>
    <ligand>
        <name>Mg(2+)</name>
        <dbReference type="ChEBI" id="CHEBI:18420"/>
        <label>1</label>
    </ligand>
</feature>
<feature type="binding site" evidence="1">
    <location>
        <position position="413"/>
    </location>
    <ligand>
        <name>Mg(2+)</name>
        <dbReference type="ChEBI" id="CHEBI:18420"/>
        <label>1</label>
    </ligand>
</feature>
<feature type="binding site" evidence="1">
    <location>
        <position position="413"/>
    </location>
    <ligand>
        <name>Mg(2+)</name>
        <dbReference type="ChEBI" id="CHEBI:18420"/>
        <label>2</label>
    </ligand>
</feature>
<gene>
    <name evidence="1" type="primary">lysS</name>
    <name type="ordered locus">SAV0517</name>
</gene>
<organism>
    <name type="scientific">Staphylococcus aureus (strain Mu50 / ATCC 700699)</name>
    <dbReference type="NCBI Taxonomy" id="158878"/>
    <lineage>
        <taxon>Bacteria</taxon>
        <taxon>Bacillati</taxon>
        <taxon>Bacillota</taxon>
        <taxon>Bacilli</taxon>
        <taxon>Bacillales</taxon>
        <taxon>Staphylococcaceae</taxon>
        <taxon>Staphylococcus</taxon>
    </lineage>
</organism>
<keyword id="KW-0030">Aminoacyl-tRNA synthetase</keyword>
<keyword id="KW-0067">ATP-binding</keyword>
<keyword id="KW-0963">Cytoplasm</keyword>
<keyword id="KW-0436">Ligase</keyword>
<keyword id="KW-0460">Magnesium</keyword>
<keyword id="KW-0479">Metal-binding</keyword>
<keyword id="KW-0547">Nucleotide-binding</keyword>
<keyword id="KW-0648">Protein biosynthesis</keyword>
<reference key="1">
    <citation type="journal article" date="2001" name="Lancet">
        <title>Whole genome sequencing of meticillin-resistant Staphylococcus aureus.</title>
        <authorList>
            <person name="Kuroda M."/>
            <person name="Ohta T."/>
            <person name="Uchiyama I."/>
            <person name="Baba T."/>
            <person name="Yuzawa H."/>
            <person name="Kobayashi I."/>
            <person name="Cui L."/>
            <person name="Oguchi A."/>
            <person name="Aoki K."/>
            <person name="Nagai Y."/>
            <person name="Lian J.-Q."/>
            <person name="Ito T."/>
            <person name="Kanamori M."/>
            <person name="Matsumaru H."/>
            <person name="Maruyama A."/>
            <person name="Murakami H."/>
            <person name="Hosoyama A."/>
            <person name="Mizutani-Ui Y."/>
            <person name="Takahashi N.K."/>
            <person name="Sawano T."/>
            <person name="Inoue R."/>
            <person name="Kaito C."/>
            <person name="Sekimizu K."/>
            <person name="Hirakawa H."/>
            <person name="Kuhara S."/>
            <person name="Goto S."/>
            <person name="Yabuzaki J."/>
            <person name="Kanehisa M."/>
            <person name="Yamashita A."/>
            <person name="Oshima K."/>
            <person name="Furuya K."/>
            <person name="Yoshino C."/>
            <person name="Shiba T."/>
            <person name="Hattori M."/>
            <person name="Ogasawara N."/>
            <person name="Hayashi H."/>
            <person name="Hiramatsu K."/>
        </authorList>
    </citation>
    <scope>NUCLEOTIDE SEQUENCE [LARGE SCALE GENOMIC DNA]</scope>
    <source>
        <strain>Mu50 / ATCC 700699</strain>
    </source>
</reference>
<sequence length="495" mass="56719">MSEEMNDQMLVRRQKLQELYDLGIDPFGSKFDRSGLSSDLKEEWDQYSKEELVEKEADSHVAIAGRLMTKRGKGKAGFAHVQDLAGQIQIYVRKDQVGDDEFDLWKNADLGDIVGVEGVMFKTNTGELSVKAKKFTLLTKSLRPLPDKFHGLQDIEQRYRQRYLDLITNEDSTRTFINRSKIIQEMRNYLNNKGFLEVETPMMHQIAGGAAARPFVTHHNALDATLYMRIAIELHLKRLIVGGLEKVYEIGRVFRNEGVSTRHNPEFTMIELYEAYADYHDIMDLTESMVRHIANEVLGSAKVQYNGETIDLESAWTRLHIVDAVKEATGVDFYEVKSDEEAKALAKEHGIEIKDTMKYGHILNEFFEQKVEETLIQPTFIYGHPTEISPLAKKNPEDPRFTDRFELFIVGREHANAFTELNDPIDQKGRFEAQLVEKAQGNDEAHEMDEDYIEALEYGMPPTGGLGIGIDRLVMLLTDSPSIRDVLLFPYMRQK</sequence>
<dbReference type="EC" id="6.1.1.6" evidence="1"/>
<dbReference type="EMBL" id="BA000017">
    <property type="protein sequence ID" value="BAB56679.1"/>
    <property type="molecule type" value="Genomic_DNA"/>
</dbReference>
<dbReference type="RefSeq" id="WP_001288202.1">
    <property type="nucleotide sequence ID" value="NC_002758.2"/>
</dbReference>
<dbReference type="SMR" id="P67609"/>
<dbReference type="GeneID" id="98344832"/>
<dbReference type="KEGG" id="sav:SAV0517"/>
<dbReference type="HOGENOM" id="CLU_008255_6_0_9"/>
<dbReference type="PhylomeDB" id="P67609"/>
<dbReference type="Proteomes" id="UP000002481">
    <property type="component" value="Chromosome"/>
</dbReference>
<dbReference type="GO" id="GO:0005829">
    <property type="term" value="C:cytosol"/>
    <property type="evidence" value="ECO:0007669"/>
    <property type="project" value="TreeGrafter"/>
</dbReference>
<dbReference type="GO" id="GO:0005524">
    <property type="term" value="F:ATP binding"/>
    <property type="evidence" value="ECO:0007669"/>
    <property type="project" value="UniProtKB-UniRule"/>
</dbReference>
<dbReference type="GO" id="GO:0140096">
    <property type="term" value="F:catalytic activity, acting on a protein"/>
    <property type="evidence" value="ECO:0007669"/>
    <property type="project" value="UniProtKB-ARBA"/>
</dbReference>
<dbReference type="GO" id="GO:0004824">
    <property type="term" value="F:lysine-tRNA ligase activity"/>
    <property type="evidence" value="ECO:0007669"/>
    <property type="project" value="UniProtKB-UniRule"/>
</dbReference>
<dbReference type="GO" id="GO:0000287">
    <property type="term" value="F:magnesium ion binding"/>
    <property type="evidence" value="ECO:0007669"/>
    <property type="project" value="UniProtKB-UniRule"/>
</dbReference>
<dbReference type="GO" id="GO:0016740">
    <property type="term" value="F:transferase activity"/>
    <property type="evidence" value="ECO:0007669"/>
    <property type="project" value="UniProtKB-ARBA"/>
</dbReference>
<dbReference type="GO" id="GO:0000049">
    <property type="term" value="F:tRNA binding"/>
    <property type="evidence" value="ECO:0007669"/>
    <property type="project" value="TreeGrafter"/>
</dbReference>
<dbReference type="GO" id="GO:0006430">
    <property type="term" value="P:lysyl-tRNA aminoacylation"/>
    <property type="evidence" value="ECO:0007669"/>
    <property type="project" value="UniProtKB-UniRule"/>
</dbReference>
<dbReference type="CDD" id="cd00775">
    <property type="entry name" value="LysRS_core"/>
    <property type="match status" value="1"/>
</dbReference>
<dbReference type="CDD" id="cd04322">
    <property type="entry name" value="LysRS_N"/>
    <property type="match status" value="1"/>
</dbReference>
<dbReference type="FunFam" id="2.40.50.140:FF:000024">
    <property type="entry name" value="Lysine--tRNA ligase"/>
    <property type="match status" value="1"/>
</dbReference>
<dbReference type="FunFam" id="3.30.930.10:FF:000001">
    <property type="entry name" value="Lysine--tRNA ligase"/>
    <property type="match status" value="1"/>
</dbReference>
<dbReference type="Gene3D" id="3.30.930.10">
    <property type="entry name" value="Bira Bifunctional Protein, Domain 2"/>
    <property type="match status" value="1"/>
</dbReference>
<dbReference type="Gene3D" id="2.40.50.140">
    <property type="entry name" value="Nucleic acid-binding proteins"/>
    <property type="match status" value="1"/>
</dbReference>
<dbReference type="HAMAP" id="MF_00252">
    <property type="entry name" value="Lys_tRNA_synth_class2"/>
    <property type="match status" value="1"/>
</dbReference>
<dbReference type="InterPro" id="IPR004364">
    <property type="entry name" value="Aa-tRNA-synt_II"/>
</dbReference>
<dbReference type="InterPro" id="IPR006195">
    <property type="entry name" value="aa-tRNA-synth_II"/>
</dbReference>
<dbReference type="InterPro" id="IPR045864">
    <property type="entry name" value="aa-tRNA-synth_II/BPL/LPL"/>
</dbReference>
<dbReference type="InterPro" id="IPR002313">
    <property type="entry name" value="Lys-tRNA-ligase_II"/>
</dbReference>
<dbReference type="InterPro" id="IPR034762">
    <property type="entry name" value="Lys-tRNA-ligase_II_bac/euk"/>
</dbReference>
<dbReference type="InterPro" id="IPR044136">
    <property type="entry name" value="Lys-tRNA-ligase_II_N"/>
</dbReference>
<dbReference type="InterPro" id="IPR018149">
    <property type="entry name" value="Lys-tRNA-synth_II_C"/>
</dbReference>
<dbReference type="InterPro" id="IPR012340">
    <property type="entry name" value="NA-bd_OB-fold"/>
</dbReference>
<dbReference type="InterPro" id="IPR004365">
    <property type="entry name" value="NA-bd_OB_tRNA"/>
</dbReference>
<dbReference type="NCBIfam" id="TIGR00499">
    <property type="entry name" value="lysS_bact"/>
    <property type="match status" value="1"/>
</dbReference>
<dbReference type="NCBIfam" id="NF001756">
    <property type="entry name" value="PRK00484.1"/>
    <property type="match status" value="1"/>
</dbReference>
<dbReference type="PANTHER" id="PTHR42918:SF15">
    <property type="entry name" value="LYSINE--TRNA LIGASE, CHLOROPLASTIC_MITOCHONDRIAL"/>
    <property type="match status" value="1"/>
</dbReference>
<dbReference type="PANTHER" id="PTHR42918">
    <property type="entry name" value="LYSYL-TRNA SYNTHETASE"/>
    <property type="match status" value="1"/>
</dbReference>
<dbReference type="Pfam" id="PF00152">
    <property type="entry name" value="tRNA-synt_2"/>
    <property type="match status" value="1"/>
</dbReference>
<dbReference type="Pfam" id="PF01336">
    <property type="entry name" value="tRNA_anti-codon"/>
    <property type="match status" value="1"/>
</dbReference>
<dbReference type="PIRSF" id="PIRSF039101">
    <property type="entry name" value="LysRS2"/>
    <property type="match status" value="1"/>
</dbReference>
<dbReference type="PRINTS" id="PR00982">
    <property type="entry name" value="TRNASYNTHLYS"/>
</dbReference>
<dbReference type="SUPFAM" id="SSF55681">
    <property type="entry name" value="Class II aaRS and biotin synthetases"/>
    <property type="match status" value="1"/>
</dbReference>
<dbReference type="SUPFAM" id="SSF50249">
    <property type="entry name" value="Nucleic acid-binding proteins"/>
    <property type="match status" value="1"/>
</dbReference>
<dbReference type="PROSITE" id="PS50862">
    <property type="entry name" value="AA_TRNA_LIGASE_II"/>
    <property type="match status" value="1"/>
</dbReference>
<protein>
    <recommendedName>
        <fullName evidence="1">Lysine--tRNA ligase</fullName>
        <ecNumber evidence="1">6.1.1.6</ecNumber>
    </recommendedName>
    <alternativeName>
        <fullName evidence="1">Lysyl-tRNA synthetase</fullName>
        <shortName evidence="1">LysRS</shortName>
    </alternativeName>
</protein>
<proteinExistence type="inferred from homology"/>
<comment type="catalytic activity">
    <reaction evidence="1">
        <text>tRNA(Lys) + L-lysine + ATP = L-lysyl-tRNA(Lys) + AMP + diphosphate</text>
        <dbReference type="Rhea" id="RHEA:20792"/>
        <dbReference type="Rhea" id="RHEA-COMP:9696"/>
        <dbReference type="Rhea" id="RHEA-COMP:9697"/>
        <dbReference type="ChEBI" id="CHEBI:30616"/>
        <dbReference type="ChEBI" id="CHEBI:32551"/>
        <dbReference type="ChEBI" id="CHEBI:33019"/>
        <dbReference type="ChEBI" id="CHEBI:78442"/>
        <dbReference type="ChEBI" id="CHEBI:78529"/>
        <dbReference type="ChEBI" id="CHEBI:456215"/>
        <dbReference type="EC" id="6.1.1.6"/>
    </reaction>
</comment>
<comment type="cofactor">
    <cofactor evidence="1">
        <name>Mg(2+)</name>
        <dbReference type="ChEBI" id="CHEBI:18420"/>
    </cofactor>
    <text evidence="1">Binds 3 Mg(2+) ions per subunit.</text>
</comment>
<comment type="subunit">
    <text evidence="1">Homodimer.</text>
</comment>
<comment type="subcellular location">
    <subcellularLocation>
        <location evidence="1">Cytoplasm</location>
    </subcellularLocation>
</comment>
<comment type="similarity">
    <text evidence="1">Belongs to the class-II aminoacyl-tRNA synthetase family.</text>
</comment>
<name>SYK_STAAM</name>
<evidence type="ECO:0000255" key="1">
    <source>
        <dbReference type="HAMAP-Rule" id="MF_00252"/>
    </source>
</evidence>
<accession>P67609</accession>
<accession>Q99W86</accession>